<organism>
    <name type="scientific">Xenopus tropicalis</name>
    <name type="common">Western clawed frog</name>
    <name type="synonym">Silurana tropicalis</name>
    <dbReference type="NCBI Taxonomy" id="8364"/>
    <lineage>
        <taxon>Eukaryota</taxon>
        <taxon>Metazoa</taxon>
        <taxon>Chordata</taxon>
        <taxon>Craniata</taxon>
        <taxon>Vertebrata</taxon>
        <taxon>Euteleostomi</taxon>
        <taxon>Amphibia</taxon>
        <taxon>Batrachia</taxon>
        <taxon>Anura</taxon>
        <taxon>Pipoidea</taxon>
        <taxon>Pipidae</taxon>
        <taxon>Xenopodinae</taxon>
        <taxon>Xenopus</taxon>
        <taxon>Silurana</taxon>
    </lineage>
</organism>
<protein>
    <recommendedName>
        <fullName evidence="1">Enolase-phosphatase E1</fullName>
        <ecNumber evidence="1">3.1.3.77</ecNumber>
    </recommendedName>
    <alternativeName>
        <fullName evidence="1">2,3-diketo-5-methylthio-1-phosphopentane phosphatase</fullName>
    </alternativeName>
    <alternativeName>
        <fullName evidence="1">MASA homolog</fullName>
    </alternativeName>
</protein>
<gene>
    <name type="primary">enoph1</name>
    <name type="synonym">masa</name>
    <name type="ORF">TTpA008k20.1</name>
</gene>
<comment type="function">
    <text evidence="1">Bifunctional enzyme that catalyzes the enolization of 2,3-diketo-5-methylthiopentyl-1-phosphate (DK-MTP-1-P) into the intermediate 2-hydroxy-3-keto-5-methylthiopentenyl-1-phosphate (HK-MTPenyl-1-P), which is then dephosphorylated to form the acireductone 1,2-dihydroxy-3-keto-5-methylthiopentene (DHK-MTPene).</text>
</comment>
<comment type="catalytic activity">
    <reaction evidence="1">
        <text>5-methylsulfanyl-2,3-dioxopentyl phosphate + H2O = 1,2-dihydroxy-5-(methylsulfanyl)pent-1-en-3-one + phosphate</text>
        <dbReference type="Rhea" id="RHEA:21700"/>
        <dbReference type="ChEBI" id="CHEBI:15377"/>
        <dbReference type="ChEBI" id="CHEBI:43474"/>
        <dbReference type="ChEBI" id="CHEBI:49252"/>
        <dbReference type="ChEBI" id="CHEBI:58828"/>
        <dbReference type="EC" id="3.1.3.77"/>
    </reaction>
</comment>
<comment type="cofactor">
    <cofactor evidence="1">
        <name>Mg(2+)</name>
        <dbReference type="ChEBI" id="CHEBI:18420"/>
    </cofactor>
    <text evidence="1">Binds 1 Mg(2+) ion per subunit.</text>
</comment>
<comment type="pathway">
    <text evidence="1">Amino-acid biosynthesis; L-methionine biosynthesis via salvage pathway; L-methionine from S-methyl-5-thio-alpha-D-ribose 1-phosphate: step 3/6.</text>
</comment>
<comment type="pathway">
    <text evidence="1">Amino-acid biosynthesis; L-methionine biosynthesis via salvage pathway; L-methionine from S-methyl-5-thio-alpha-D-ribose 1-phosphate: step 4/6.</text>
</comment>
<comment type="subunit">
    <text evidence="1">Monomer.</text>
</comment>
<comment type="subcellular location">
    <subcellularLocation>
        <location evidence="1">Cytoplasm</location>
    </subcellularLocation>
    <subcellularLocation>
        <location evidence="1">Nucleus</location>
    </subcellularLocation>
</comment>
<comment type="similarity">
    <text evidence="1">Belongs to the HAD-like hydrolase superfamily. MasA/MtnC family.</text>
</comment>
<name>ENOPH_XENTR</name>
<evidence type="ECO:0000255" key="1">
    <source>
        <dbReference type="HAMAP-Rule" id="MF_03117"/>
    </source>
</evidence>
<accession>Q28C69</accession>
<proteinExistence type="evidence at transcript level"/>
<feature type="chain" id="PRO_0000254011" description="Enolase-phosphatase E1">
    <location>
        <begin position="1"/>
        <end position="259"/>
    </location>
</feature>
<feature type="binding site" evidence="1">
    <location>
        <position position="16"/>
    </location>
    <ligand>
        <name>Mg(2+)</name>
        <dbReference type="ChEBI" id="CHEBI:18420"/>
    </ligand>
</feature>
<feature type="binding site" evidence="1">
    <location>
        <position position="18"/>
    </location>
    <ligand>
        <name>Mg(2+)</name>
        <dbReference type="ChEBI" id="CHEBI:18420"/>
    </ligand>
</feature>
<feature type="binding site" evidence="1">
    <location>
        <begin position="151"/>
        <end position="152"/>
    </location>
    <ligand>
        <name>substrate</name>
    </ligand>
</feature>
<feature type="binding site" evidence="1">
    <location>
        <position position="185"/>
    </location>
    <ligand>
        <name>substrate</name>
    </ligand>
</feature>
<feature type="binding site" evidence="1">
    <location>
        <position position="210"/>
    </location>
    <ligand>
        <name>Mg(2+)</name>
        <dbReference type="ChEBI" id="CHEBI:18420"/>
    </ligand>
</feature>
<reference key="1">
    <citation type="submission" date="2006-06" db="EMBL/GenBank/DDBJ databases">
        <authorList>
            <consortium name="Sanger Xenopus tropicalis EST/cDNA project"/>
        </authorList>
    </citation>
    <scope>NUCLEOTIDE SEQUENCE [LARGE SCALE MRNA]</scope>
    <source>
        <tissue>Tadpole</tissue>
    </source>
</reference>
<reference key="2">
    <citation type="submission" date="2006-07" db="EMBL/GenBank/DDBJ databases">
        <authorList>
            <consortium name="NIH - Xenopus Gene Collection (XGC) project"/>
        </authorList>
    </citation>
    <scope>NUCLEOTIDE SEQUENCE [LARGE SCALE MRNA]</scope>
    <source>
        <tissue>Brain</tissue>
    </source>
</reference>
<sequence length="259" mass="29184">MALFSVPPPVTVILLDIEGTTTPITFVKDVLFPYVKENIKKYLLEHWQEKECQEDVTQLQKQAEKDSHLDGFVPIPSGVSDNTTEHMIQAVVDNVYWQMSFDRKTTALKQLQGHMWRSAYISGQLKGEVYEDVVPSIRQWRELGIKLYIYSSGSIDAQKLLFGYSIEGDLLKLLDGHFDTNIGHKVESKSYRNIADNIGCLPENILFLTDVVKEALAAEKAGLHVAVVVRPGNAALTDEDKSNCCCITSFHQIHFPSQK</sequence>
<keyword id="KW-0028">Amino-acid biosynthesis</keyword>
<keyword id="KW-0963">Cytoplasm</keyword>
<keyword id="KW-0378">Hydrolase</keyword>
<keyword id="KW-0460">Magnesium</keyword>
<keyword id="KW-0479">Metal-binding</keyword>
<keyword id="KW-0486">Methionine biosynthesis</keyword>
<keyword id="KW-0539">Nucleus</keyword>
<keyword id="KW-1185">Reference proteome</keyword>
<dbReference type="EC" id="3.1.3.77" evidence="1"/>
<dbReference type="EMBL" id="CR942427">
    <property type="protein sequence ID" value="CAJ83209.1"/>
    <property type="molecule type" value="mRNA"/>
</dbReference>
<dbReference type="EMBL" id="BC118728">
    <property type="protein sequence ID" value="AAI18729.1"/>
    <property type="molecule type" value="mRNA"/>
</dbReference>
<dbReference type="RefSeq" id="NP_001039112.1">
    <property type="nucleotide sequence ID" value="NM_001045647.1"/>
</dbReference>
<dbReference type="SMR" id="Q28C69"/>
<dbReference type="FunCoup" id="Q28C69">
    <property type="interactions" value="2060"/>
</dbReference>
<dbReference type="STRING" id="8364.ENSXETP00000028453"/>
<dbReference type="PaxDb" id="8364-ENSXETP00000027523"/>
<dbReference type="DNASU" id="733933"/>
<dbReference type="GeneID" id="733933"/>
<dbReference type="KEGG" id="xtr:733933"/>
<dbReference type="AGR" id="Xenbase:XB-GENE-954014"/>
<dbReference type="CTD" id="58478"/>
<dbReference type="Xenbase" id="XB-GENE-954014">
    <property type="gene designation" value="enoph1"/>
</dbReference>
<dbReference type="eggNOG" id="KOG2630">
    <property type="taxonomic scope" value="Eukaryota"/>
</dbReference>
<dbReference type="InParanoid" id="Q28C69"/>
<dbReference type="OMA" id="LQGMVWE"/>
<dbReference type="OrthoDB" id="272500at2759"/>
<dbReference type="Reactome" id="R-XTR-1237112">
    <property type="pathway name" value="Methionine salvage pathway"/>
</dbReference>
<dbReference type="UniPathway" id="UPA00904">
    <property type="reaction ID" value="UER00876"/>
</dbReference>
<dbReference type="UniPathway" id="UPA00904">
    <property type="reaction ID" value="UER00877"/>
</dbReference>
<dbReference type="Proteomes" id="UP000008143">
    <property type="component" value="Chromosome 1"/>
</dbReference>
<dbReference type="GO" id="GO:0005737">
    <property type="term" value="C:cytoplasm"/>
    <property type="evidence" value="ECO:0007669"/>
    <property type="project" value="UniProtKB-SubCell"/>
</dbReference>
<dbReference type="GO" id="GO:0005634">
    <property type="term" value="C:nucleus"/>
    <property type="evidence" value="ECO:0007669"/>
    <property type="project" value="UniProtKB-SubCell"/>
</dbReference>
<dbReference type="GO" id="GO:0043874">
    <property type="term" value="F:acireductone synthase activity"/>
    <property type="evidence" value="ECO:0000250"/>
    <property type="project" value="UniProtKB"/>
</dbReference>
<dbReference type="GO" id="GO:0000287">
    <property type="term" value="F:magnesium ion binding"/>
    <property type="evidence" value="ECO:0007669"/>
    <property type="project" value="UniProtKB-UniRule"/>
</dbReference>
<dbReference type="GO" id="GO:0019509">
    <property type="term" value="P:L-methionine salvage from methylthioadenosine"/>
    <property type="evidence" value="ECO:0000250"/>
    <property type="project" value="UniProtKB"/>
</dbReference>
<dbReference type="CDD" id="cd01629">
    <property type="entry name" value="HAD_EP"/>
    <property type="match status" value="1"/>
</dbReference>
<dbReference type="FunFam" id="1.10.720.60:FF:000002">
    <property type="entry name" value="Enolase-phosphatase E1"/>
    <property type="match status" value="1"/>
</dbReference>
<dbReference type="FunFam" id="3.40.50.1000:FF:000102">
    <property type="entry name" value="Enolase-phosphatase E1"/>
    <property type="match status" value="1"/>
</dbReference>
<dbReference type="Gene3D" id="1.10.720.60">
    <property type="match status" value="1"/>
</dbReference>
<dbReference type="Gene3D" id="3.40.50.1000">
    <property type="entry name" value="HAD superfamily/HAD-like"/>
    <property type="match status" value="1"/>
</dbReference>
<dbReference type="HAMAP" id="MF_01681">
    <property type="entry name" value="Salvage_MtnC"/>
    <property type="match status" value="1"/>
</dbReference>
<dbReference type="HAMAP" id="MF_03117">
    <property type="entry name" value="Salvage_MtnC_euk"/>
    <property type="match status" value="1"/>
</dbReference>
<dbReference type="InterPro" id="IPR023943">
    <property type="entry name" value="Enolase-ppase_E1"/>
</dbReference>
<dbReference type="InterPro" id="IPR027511">
    <property type="entry name" value="ENOPH1_eukaryotes"/>
</dbReference>
<dbReference type="InterPro" id="IPR036412">
    <property type="entry name" value="HAD-like_sf"/>
</dbReference>
<dbReference type="InterPro" id="IPR006439">
    <property type="entry name" value="HAD-SF_hydro_IA"/>
</dbReference>
<dbReference type="InterPro" id="IPR023214">
    <property type="entry name" value="HAD_sf"/>
</dbReference>
<dbReference type="NCBIfam" id="TIGR01691">
    <property type="entry name" value="enolase-ppase"/>
    <property type="match status" value="1"/>
</dbReference>
<dbReference type="NCBIfam" id="TIGR01549">
    <property type="entry name" value="HAD-SF-IA-v1"/>
    <property type="match status" value="1"/>
</dbReference>
<dbReference type="PANTHER" id="PTHR20371">
    <property type="entry name" value="ENOLASE-PHOSPHATASE E1"/>
    <property type="match status" value="1"/>
</dbReference>
<dbReference type="PANTHER" id="PTHR20371:SF1">
    <property type="entry name" value="ENOLASE-PHOSPHATASE E1"/>
    <property type="match status" value="1"/>
</dbReference>
<dbReference type="Pfam" id="PF00702">
    <property type="entry name" value="Hydrolase"/>
    <property type="match status" value="1"/>
</dbReference>
<dbReference type="SFLD" id="SFLDF00044">
    <property type="entry name" value="enolase-phosphatase"/>
    <property type="match status" value="1"/>
</dbReference>
<dbReference type="SFLD" id="SFLDS00003">
    <property type="entry name" value="Haloacid_Dehalogenase"/>
    <property type="match status" value="1"/>
</dbReference>
<dbReference type="SUPFAM" id="SSF56784">
    <property type="entry name" value="HAD-like"/>
    <property type="match status" value="1"/>
</dbReference>